<comment type="function">
    <text evidence="1">Involved in the degradation of phospho-AI-2, thereby terminating induction of the lsr operon and closing the AI-2 signaling cycle. Catalyzes the transfer of an acetyl moiety from 3-hydroxy-5-phosphonooxypentane-2,4-dione to CoA to form glycerone phosphate and acetyl-CoA.</text>
</comment>
<comment type="catalytic activity">
    <reaction evidence="1">
        <text>dihydroxyacetone phosphate + acetyl-CoA = 3-hydroxy-2,4-dioxopentyl phosphate + CoA</text>
        <dbReference type="Rhea" id="RHEA:44736"/>
        <dbReference type="ChEBI" id="CHEBI:57287"/>
        <dbReference type="ChEBI" id="CHEBI:57288"/>
        <dbReference type="ChEBI" id="CHEBI:57642"/>
        <dbReference type="ChEBI" id="CHEBI:84359"/>
        <dbReference type="EC" id="2.3.1.245"/>
    </reaction>
</comment>
<comment type="subunit">
    <text evidence="1">Homodecamer.</text>
</comment>
<comment type="subcellular location">
    <subcellularLocation>
        <location evidence="2">Cytoplasm</location>
    </subcellularLocation>
</comment>
<comment type="similarity">
    <text evidence="2">Belongs to the DeoC/FbaB aldolase family.</text>
</comment>
<proteinExistence type="inferred from homology"/>
<evidence type="ECO:0000250" key="1">
    <source>
        <dbReference type="UniProtKB" id="P76143"/>
    </source>
</evidence>
<evidence type="ECO:0000305" key="2"/>
<gene>
    <name type="primary">lsrF</name>
    <name type="ordered locus">SFV_1574</name>
</gene>
<accession>Q0T4L4</accession>
<sequence>MQSRLSWIFNPKTGKTVMLAFDHGYFQGPTTGLERIDINIAPLFEHADVLMCTRGILRSVVPPATNKPGVLRASGANSILAELSNEAVALSMDDAVRLNSCAVAAQVYIGSEYEHQSIKNIIQLVDAGMKVGMPTMAVTGVGKDMVRDQRYFSLATRIAAEMGAQIIKTYYVEKGFERIVAGCPVPIVIAGGKKLPERETLEMCWQAIDQGASGVDMGRNIFQSDHPVAMMKAVQAVVHHNETADRAYELYLSEKQ</sequence>
<dbReference type="EC" id="2.3.1.245" evidence="1"/>
<dbReference type="EMBL" id="CP000266">
    <property type="protein sequence ID" value="ABF03751.1"/>
    <property type="molecule type" value="Genomic_DNA"/>
</dbReference>
<dbReference type="RefSeq" id="WP_001191843.1">
    <property type="nucleotide sequence ID" value="NC_008258.1"/>
</dbReference>
<dbReference type="SMR" id="Q0T4L4"/>
<dbReference type="KEGG" id="sfv:SFV_1574"/>
<dbReference type="HOGENOM" id="CLU_057069_1_0_6"/>
<dbReference type="Proteomes" id="UP000000659">
    <property type="component" value="Chromosome"/>
</dbReference>
<dbReference type="GO" id="GO:0005737">
    <property type="term" value="C:cytoplasm"/>
    <property type="evidence" value="ECO:0007669"/>
    <property type="project" value="UniProtKB-SubCell"/>
</dbReference>
<dbReference type="GO" id="GO:0004332">
    <property type="term" value="F:fructose-bisphosphate aldolase activity"/>
    <property type="evidence" value="ECO:0007669"/>
    <property type="project" value="InterPro"/>
</dbReference>
<dbReference type="GO" id="GO:0016740">
    <property type="term" value="F:transferase activity"/>
    <property type="evidence" value="ECO:0007669"/>
    <property type="project" value="UniProtKB-KW"/>
</dbReference>
<dbReference type="CDD" id="cd00958">
    <property type="entry name" value="DhnA"/>
    <property type="match status" value="1"/>
</dbReference>
<dbReference type="Gene3D" id="3.20.20.70">
    <property type="entry name" value="Aldolase class I"/>
    <property type="match status" value="1"/>
</dbReference>
<dbReference type="InterPro" id="IPR013785">
    <property type="entry name" value="Aldolase_TIM"/>
</dbReference>
<dbReference type="InterPro" id="IPR002915">
    <property type="entry name" value="DeoC/FbaB/LacD_aldolase"/>
</dbReference>
<dbReference type="InterPro" id="IPR050456">
    <property type="entry name" value="DeoC/FbaB_aldolase"/>
</dbReference>
<dbReference type="InterPro" id="IPR041720">
    <property type="entry name" value="FbaB-like"/>
</dbReference>
<dbReference type="NCBIfam" id="NF006081">
    <property type="entry name" value="PRK08227.1"/>
    <property type="match status" value="1"/>
</dbReference>
<dbReference type="PANTHER" id="PTHR47916:SF1">
    <property type="entry name" value="3-HYDROXY-5-PHOSPHONOOXYPENTANE-2,4-DIONE THIOLASE"/>
    <property type="match status" value="1"/>
</dbReference>
<dbReference type="PANTHER" id="PTHR47916">
    <property type="entry name" value="FRUCTOSE-BISPHOSPHATE ALDOLASE CLASS 1"/>
    <property type="match status" value="1"/>
</dbReference>
<dbReference type="Pfam" id="PF01791">
    <property type="entry name" value="DeoC"/>
    <property type="match status" value="1"/>
</dbReference>
<dbReference type="PIRSF" id="PIRSF038992">
    <property type="entry name" value="Aldolase_Ia"/>
    <property type="match status" value="1"/>
</dbReference>
<dbReference type="SMART" id="SM01133">
    <property type="entry name" value="DeoC"/>
    <property type="match status" value="1"/>
</dbReference>
<dbReference type="SUPFAM" id="SSF51569">
    <property type="entry name" value="Aldolase"/>
    <property type="match status" value="1"/>
</dbReference>
<reference key="1">
    <citation type="journal article" date="2006" name="BMC Genomics">
        <title>Complete genome sequence of Shigella flexneri 5b and comparison with Shigella flexneri 2a.</title>
        <authorList>
            <person name="Nie H."/>
            <person name="Yang F."/>
            <person name="Zhang X."/>
            <person name="Yang J."/>
            <person name="Chen L."/>
            <person name="Wang J."/>
            <person name="Xiong Z."/>
            <person name="Peng J."/>
            <person name="Sun L."/>
            <person name="Dong J."/>
            <person name="Xue Y."/>
            <person name="Xu X."/>
            <person name="Chen S."/>
            <person name="Yao Z."/>
            <person name="Shen Y."/>
            <person name="Jin Q."/>
        </authorList>
    </citation>
    <scope>NUCLEOTIDE SEQUENCE [LARGE SCALE GENOMIC DNA]</scope>
    <source>
        <strain>8401</strain>
    </source>
</reference>
<feature type="chain" id="PRO_0000351532" description="3-hydroxy-5-phosphonooxypentane-2,4-dione thiolase">
    <location>
        <begin position="1"/>
        <end position="256"/>
    </location>
</feature>
<feature type="active site" description="Schiff-base intermediate with substrate" evidence="1">
    <location>
        <position position="168"/>
    </location>
</feature>
<protein>
    <recommendedName>
        <fullName evidence="1">3-hydroxy-5-phosphonooxypentane-2,4-dione thiolase</fullName>
        <ecNumber evidence="1">2.3.1.245</ecNumber>
    </recommendedName>
</protein>
<organism>
    <name type="scientific">Shigella flexneri serotype 5b (strain 8401)</name>
    <dbReference type="NCBI Taxonomy" id="373384"/>
    <lineage>
        <taxon>Bacteria</taxon>
        <taxon>Pseudomonadati</taxon>
        <taxon>Pseudomonadota</taxon>
        <taxon>Gammaproteobacteria</taxon>
        <taxon>Enterobacterales</taxon>
        <taxon>Enterobacteriaceae</taxon>
        <taxon>Shigella</taxon>
    </lineage>
</organism>
<keyword id="KW-0963">Cytoplasm</keyword>
<keyword id="KW-0704">Schiff base</keyword>
<keyword id="KW-0808">Transferase</keyword>
<name>LSRF_SHIF8</name>